<dbReference type="EC" id="5.3.1.6" evidence="1"/>
<dbReference type="EMBL" id="AE009442">
    <property type="protein sequence ID" value="AAO28665.1"/>
    <property type="molecule type" value="Genomic_DNA"/>
</dbReference>
<dbReference type="RefSeq" id="WP_004091185.1">
    <property type="nucleotide sequence ID" value="NC_004556.1"/>
</dbReference>
<dbReference type="SMR" id="Q87D89"/>
<dbReference type="GeneID" id="93904581"/>
<dbReference type="KEGG" id="xft:PD_0797"/>
<dbReference type="HOGENOM" id="CLU_056590_1_1_6"/>
<dbReference type="UniPathway" id="UPA00115">
    <property type="reaction ID" value="UER00412"/>
</dbReference>
<dbReference type="Proteomes" id="UP000002516">
    <property type="component" value="Chromosome"/>
</dbReference>
<dbReference type="GO" id="GO:0005829">
    <property type="term" value="C:cytosol"/>
    <property type="evidence" value="ECO:0007669"/>
    <property type="project" value="TreeGrafter"/>
</dbReference>
<dbReference type="GO" id="GO:0004751">
    <property type="term" value="F:ribose-5-phosphate isomerase activity"/>
    <property type="evidence" value="ECO:0007669"/>
    <property type="project" value="UniProtKB-UniRule"/>
</dbReference>
<dbReference type="GO" id="GO:0006014">
    <property type="term" value="P:D-ribose metabolic process"/>
    <property type="evidence" value="ECO:0007669"/>
    <property type="project" value="TreeGrafter"/>
</dbReference>
<dbReference type="GO" id="GO:0009052">
    <property type="term" value="P:pentose-phosphate shunt, non-oxidative branch"/>
    <property type="evidence" value="ECO:0007669"/>
    <property type="project" value="UniProtKB-UniRule"/>
</dbReference>
<dbReference type="CDD" id="cd01398">
    <property type="entry name" value="RPI_A"/>
    <property type="match status" value="1"/>
</dbReference>
<dbReference type="FunFam" id="3.30.70.260:FF:000004">
    <property type="entry name" value="Ribose-5-phosphate isomerase A"/>
    <property type="match status" value="1"/>
</dbReference>
<dbReference type="FunFam" id="3.40.50.1360:FF:000001">
    <property type="entry name" value="Ribose-5-phosphate isomerase A"/>
    <property type="match status" value="1"/>
</dbReference>
<dbReference type="Gene3D" id="3.30.70.260">
    <property type="match status" value="1"/>
</dbReference>
<dbReference type="Gene3D" id="3.40.50.1360">
    <property type="match status" value="1"/>
</dbReference>
<dbReference type="HAMAP" id="MF_00170">
    <property type="entry name" value="Rib_5P_isom_A"/>
    <property type="match status" value="1"/>
</dbReference>
<dbReference type="InterPro" id="IPR037171">
    <property type="entry name" value="NagB/RpiA_transferase-like"/>
</dbReference>
<dbReference type="InterPro" id="IPR020672">
    <property type="entry name" value="Ribose5P_isomerase_typA_subgr"/>
</dbReference>
<dbReference type="InterPro" id="IPR004788">
    <property type="entry name" value="Ribose5P_isomerase_type_A"/>
</dbReference>
<dbReference type="NCBIfam" id="NF001924">
    <property type="entry name" value="PRK00702.1"/>
    <property type="match status" value="1"/>
</dbReference>
<dbReference type="NCBIfam" id="TIGR00021">
    <property type="entry name" value="rpiA"/>
    <property type="match status" value="1"/>
</dbReference>
<dbReference type="PANTHER" id="PTHR11934">
    <property type="entry name" value="RIBOSE-5-PHOSPHATE ISOMERASE"/>
    <property type="match status" value="1"/>
</dbReference>
<dbReference type="PANTHER" id="PTHR11934:SF0">
    <property type="entry name" value="RIBOSE-5-PHOSPHATE ISOMERASE"/>
    <property type="match status" value="1"/>
</dbReference>
<dbReference type="Pfam" id="PF06026">
    <property type="entry name" value="Rib_5-P_isom_A"/>
    <property type="match status" value="1"/>
</dbReference>
<dbReference type="SUPFAM" id="SSF75445">
    <property type="entry name" value="D-ribose-5-phosphate isomerase (RpiA), lid domain"/>
    <property type="match status" value="1"/>
</dbReference>
<dbReference type="SUPFAM" id="SSF100950">
    <property type="entry name" value="NagB/RpiA/CoA transferase-like"/>
    <property type="match status" value="1"/>
</dbReference>
<proteinExistence type="inferred from homology"/>
<gene>
    <name evidence="1" type="primary">rpiA</name>
    <name type="ordered locus">PD_0797</name>
</gene>
<accession>Q87D89</accession>
<evidence type="ECO:0000255" key="1">
    <source>
        <dbReference type="HAMAP-Rule" id="MF_00170"/>
    </source>
</evidence>
<organism>
    <name type="scientific">Xylella fastidiosa (strain Temecula1 / ATCC 700964)</name>
    <dbReference type="NCBI Taxonomy" id="183190"/>
    <lineage>
        <taxon>Bacteria</taxon>
        <taxon>Pseudomonadati</taxon>
        <taxon>Pseudomonadota</taxon>
        <taxon>Gammaproteobacteria</taxon>
        <taxon>Lysobacterales</taxon>
        <taxon>Lysobacteraceae</taxon>
        <taxon>Xylella</taxon>
    </lineage>
</organism>
<keyword id="KW-0413">Isomerase</keyword>
<keyword id="KW-1185">Reference proteome</keyword>
<comment type="function">
    <text evidence="1">Catalyzes the reversible conversion of ribose-5-phosphate to ribulose 5-phosphate.</text>
</comment>
<comment type="catalytic activity">
    <reaction evidence="1">
        <text>aldehydo-D-ribose 5-phosphate = D-ribulose 5-phosphate</text>
        <dbReference type="Rhea" id="RHEA:14657"/>
        <dbReference type="ChEBI" id="CHEBI:58121"/>
        <dbReference type="ChEBI" id="CHEBI:58273"/>
        <dbReference type="EC" id="5.3.1.6"/>
    </reaction>
</comment>
<comment type="pathway">
    <text evidence="1">Carbohydrate degradation; pentose phosphate pathway; D-ribose 5-phosphate from D-ribulose 5-phosphate (non-oxidative stage): step 1/1.</text>
</comment>
<comment type="subunit">
    <text evidence="1">Homodimer.</text>
</comment>
<comment type="similarity">
    <text evidence="1">Belongs to the ribose 5-phosphate isomerase family.</text>
</comment>
<feature type="chain" id="PRO_0000158500" description="Ribose-5-phosphate isomerase A">
    <location>
        <begin position="1"/>
        <end position="215"/>
    </location>
</feature>
<feature type="active site" description="Proton acceptor" evidence="1">
    <location>
        <position position="101"/>
    </location>
</feature>
<feature type="binding site" evidence="1">
    <location>
        <begin position="26"/>
        <end position="29"/>
    </location>
    <ligand>
        <name>substrate</name>
    </ligand>
</feature>
<feature type="binding site" evidence="1">
    <location>
        <begin position="79"/>
        <end position="82"/>
    </location>
    <ligand>
        <name>substrate</name>
    </ligand>
</feature>
<feature type="binding site" evidence="1">
    <location>
        <begin position="92"/>
        <end position="95"/>
    </location>
    <ligand>
        <name>substrate</name>
    </ligand>
</feature>
<feature type="binding site" evidence="1">
    <location>
        <position position="119"/>
    </location>
    <ligand>
        <name>substrate</name>
    </ligand>
</feature>
<name>RPIA_XYLFT</name>
<reference key="1">
    <citation type="journal article" date="2003" name="J. Bacteriol.">
        <title>Comparative analyses of the complete genome sequences of Pierce's disease and citrus variegated chlorosis strains of Xylella fastidiosa.</title>
        <authorList>
            <person name="Van Sluys M.A."/>
            <person name="de Oliveira M.C."/>
            <person name="Monteiro-Vitorello C.B."/>
            <person name="Miyaki C.Y."/>
            <person name="Furlan L.R."/>
            <person name="Camargo L.E.A."/>
            <person name="da Silva A.C.R."/>
            <person name="Moon D.H."/>
            <person name="Takita M.A."/>
            <person name="Lemos E.G.M."/>
            <person name="Machado M.A."/>
            <person name="Ferro M.I.T."/>
            <person name="da Silva F.R."/>
            <person name="Goldman M.H.S."/>
            <person name="Goldman G.H."/>
            <person name="Lemos M.V.F."/>
            <person name="El-Dorry H."/>
            <person name="Tsai S.M."/>
            <person name="Carrer H."/>
            <person name="Carraro D.M."/>
            <person name="de Oliveira R.C."/>
            <person name="Nunes L.R."/>
            <person name="Siqueira W.J."/>
            <person name="Coutinho L.L."/>
            <person name="Kimura E.T."/>
            <person name="Ferro E.S."/>
            <person name="Harakava R."/>
            <person name="Kuramae E.E."/>
            <person name="Marino C.L."/>
            <person name="Giglioti E."/>
            <person name="Abreu I.L."/>
            <person name="Alves L.M.C."/>
            <person name="do Amaral A.M."/>
            <person name="Baia G.S."/>
            <person name="Blanco S.R."/>
            <person name="Brito M.S."/>
            <person name="Cannavan F.S."/>
            <person name="Celestino A.V."/>
            <person name="da Cunha A.F."/>
            <person name="Fenille R.C."/>
            <person name="Ferro J.A."/>
            <person name="Formighieri E.F."/>
            <person name="Kishi L.T."/>
            <person name="Leoni S.G."/>
            <person name="Oliveira A.R."/>
            <person name="Rosa V.E. Jr."/>
            <person name="Sassaki F.T."/>
            <person name="Sena J.A.D."/>
            <person name="de Souza A.A."/>
            <person name="Truffi D."/>
            <person name="Tsukumo F."/>
            <person name="Yanai G.M."/>
            <person name="Zaros L.G."/>
            <person name="Civerolo E.L."/>
            <person name="Simpson A.J.G."/>
            <person name="Almeida N.F. Jr."/>
            <person name="Setubal J.C."/>
            <person name="Kitajima J.P."/>
        </authorList>
    </citation>
    <scope>NUCLEOTIDE SEQUENCE [LARGE SCALE GENOMIC DNA]</scope>
    <source>
        <strain>Temecula1 / ATCC 700964</strain>
    </source>
</reference>
<sequence>MSEAKRRAAEKAIEYVENDMIIGVGTGSTVAYFIDALGHTPKRIKGAVSSSEQSTAHLKQHGIEVLELNHTGTLPLYVDGADECDPYKRLIKGGGASLTREKIIAEASKQFICIIDPNKQVATLGKFPLPIEVIPMARSLVARQIMARTDGQPVWREGVITDNGNVILDVHHLCITDPVKLEQELNQIPGVVCVGLFARRCADLVIIGSEPPHIL</sequence>
<protein>
    <recommendedName>
        <fullName evidence="1">Ribose-5-phosphate isomerase A</fullName>
        <ecNumber evidence="1">5.3.1.6</ecNumber>
    </recommendedName>
    <alternativeName>
        <fullName evidence="1">Phosphoriboisomerase A</fullName>
        <shortName evidence="1">PRI</shortName>
    </alternativeName>
</protein>